<feature type="chain" id="PRO_0000157214" description="Putative septation protein SpoVG">
    <location>
        <begin position="1"/>
        <end position="101"/>
    </location>
</feature>
<reference key="1">
    <citation type="journal article" date="2005" name="Proc. Natl. Acad. Sci. U.S.A.">
        <title>Whole genome sequence of Staphylococcus saprophyticus reveals the pathogenesis of uncomplicated urinary tract infection.</title>
        <authorList>
            <person name="Kuroda M."/>
            <person name="Yamashita A."/>
            <person name="Hirakawa H."/>
            <person name="Kumano M."/>
            <person name="Morikawa K."/>
            <person name="Higashide M."/>
            <person name="Maruyama A."/>
            <person name="Inose Y."/>
            <person name="Matoba K."/>
            <person name="Toh H."/>
            <person name="Kuhara S."/>
            <person name="Hattori M."/>
            <person name="Ohta T."/>
        </authorList>
    </citation>
    <scope>NUCLEOTIDE SEQUENCE [LARGE SCALE GENOMIC DNA]</scope>
    <source>
        <strain>ATCC 15305 / DSM 20229 / NCIMB 8711 / NCTC 7292 / S-41</strain>
    </source>
</reference>
<keyword id="KW-0131">Cell cycle</keyword>
<keyword id="KW-0132">Cell division</keyword>
<keyword id="KW-1185">Reference proteome</keyword>
<keyword id="KW-0717">Septation</keyword>
<evidence type="ECO:0000255" key="1">
    <source>
        <dbReference type="HAMAP-Rule" id="MF_00819"/>
    </source>
</evidence>
<sequence>MKVTDVRLRKIQTDGRMKALVSITLDESFVVHDLRVIEGNTGLFVAMPSKRTPDGEFRDIAHPINSEMRQEIQDAVMKVYEETDEVIPDRNAQSSDDSEEA</sequence>
<dbReference type="EMBL" id="AP008934">
    <property type="protein sequence ID" value="BAE19403.1"/>
    <property type="molecule type" value="Genomic_DNA"/>
</dbReference>
<dbReference type="RefSeq" id="WP_011303873.1">
    <property type="nucleotide sequence ID" value="NZ_MTGA01000029.1"/>
</dbReference>
<dbReference type="SMR" id="Q49V07"/>
<dbReference type="GeneID" id="66868428"/>
<dbReference type="KEGG" id="ssp:SSP2258"/>
<dbReference type="eggNOG" id="COG2088">
    <property type="taxonomic scope" value="Bacteria"/>
</dbReference>
<dbReference type="HOGENOM" id="CLU_103669_2_1_9"/>
<dbReference type="OrthoDB" id="9796286at2"/>
<dbReference type="Proteomes" id="UP000006371">
    <property type="component" value="Chromosome"/>
</dbReference>
<dbReference type="GO" id="GO:0000917">
    <property type="term" value="P:division septum assembly"/>
    <property type="evidence" value="ECO:0007669"/>
    <property type="project" value="UniProtKB-KW"/>
</dbReference>
<dbReference type="GO" id="GO:0030435">
    <property type="term" value="P:sporulation resulting in formation of a cellular spore"/>
    <property type="evidence" value="ECO:0007669"/>
    <property type="project" value="InterPro"/>
</dbReference>
<dbReference type="Gene3D" id="3.30.1120.40">
    <property type="entry name" value="Stage V sporulation protein G"/>
    <property type="match status" value="1"/>
</dbReference>
<dbReference type="HAMAP" id="MF_00819">
    <property type="entry name" value="SpoVG"/>
    <property type="match status" value="1"/>
</dbReference>
<dbReference type="InterPro" id="IPR007170">
    <property type="entry name" value="SpoVG"/>
</dbReference>
<dbReference type="InterPro" id="IPR036751">
    <property type="entry name" value="SpoVG_sf"/>
</dbReference>
<dbReference type="NCBIfam" id="NF009749">
    <property type="entry name" value="PRK13259.1"/>
    <property type="match status" value="1"/>
</dbReference>
<dbReference type="PANTHER" id="PTHR38429">
    <property type="entry name" value="SEPTATION PROTEIN SPOVG-RELATED"/>
    <property type="match status" value="1"/>
</dbReference>
<dbReference type="PANTHER" id="PTHR38429:SF1">
    <property type="entry name" value="SEPTATION PROTEIN SPOVG-RELATED"/>
    <property type="match status" value="1"/>
</dbReference>
<dbReference type="Pfam" id="PF04026">
    <property type="entry name" value="SpoVG"/>
    <property type="match status" value="1"/>
</dbReference>
<dbReference type="SUPFAM" id="SSF160537">
    <property type="entry name" value="SpoVG-like"/>
    <property type="match status" value="1"/>
</dbReference>
<proteinExistence type="inferred from homology"/>
<comment type="function">
    <text evidence="1">Could be involved in septation.</text>
</comment>
<comment type="similarity">
    <text evidence="1">Belongs to the SpoVG family.</text>
</comment>
<gene>
    <name evidence="1" type="primary">spoVG</name>
    <name type="ordered locus">SSP2258</name>
</gene>
<accession>Q49V07</accession>
<protein>
    <recommendedName>
        <fullName evidence="1">Putative septation protein SpoVG</fullName>
    </recommendedName>
</protein>
<name>SP5G_STAS1</name>
<organism>
    <name type="scientific">Staphylococcus saprophyticus subsp. saprophyticus (strain ATCC 15305 / DSM 20229 / NCIMB 8711 / NCTC 7292 / S-41)</name>
    <dbReference type="NCBI Taxonomy" id="342451"/>
    <lineage>
        <taxon>Bacteria</taxon>
        <taxon>Bacillati</taxon>
        <taxon>Bacillota</taxon>
        <taxon>Bacilli</taxon>
        <taxon>Bacillales</taxon>
        <taxon>Staphylococcaceae</taxon>
        <taxon>Staphylococcus</taxon>
    </lineage>
</organism>